<keyword id="KW-0175">Coiled coil</keyword>
<keyword id="KW-0489">Methyltransferase</keyword>
<keyword id="KW-0539">Nucleus</keyword>
<keyword id="KW-1185">Reference proteome</keyword>
<keyword id="KW-0690">Ribosome biogenesis</keyword>
<keyword id="KW-0698">rRNA processing</keyword>
<keyword id="KW-0949">S-adenosyl-L-methionine</keyword>
<keyword id="KW-0808">Transferase</keyword>
<evidence type="ECO:0000255" key="1">
    <source>
        <dbReference type="HAMAP-Rule" id="MF_03163"/>
    </source>
</evidence>
<evidence type="ECO:0000256" key="2">
    <source>
        <dbReference type="SAM" id="MobiDB-lite"/>
    </source>
</evidence>
<sequence>MAIQKKHGKGRLDKWYRLAKEKGYRARAAFKLIQLNKKYGFLEKSKVLLDLCAAPGSWCQVAAECMPTQSIIIGVDLAPIKPIPRVITFQSDITTEKCRATIRQHLKHWKADTVLHDGAPNVGTAWVQDAFSQAELVLQSMKLATEFLVEGGTFVTKVFRSKDYNPLLWVFKQLFTSVEATKPPSSRNVSAEIFVVCRGFKAPKRIDPKFLDPKHVFAELTDSTPNNEARVFNPEKKKRKREGYEEGDYTQFKEIPVTEFINTTDPIAILGTYNKLSFEQSPGGDLALATLNRLEETTDEIRTCCEDLKILGKKEFRSLLRWRLKVREKFGLVVKKGQAKADEPEEVAEVAPMDEELAIQEELQRLQEKESAKRKKERRKENEKKRKEIIRMQMHMTTPMDIGMEQLGPGGDDATFSLKRVERDGARDVIASGKLAEIESDSEDDQTESDYDESDDEGDRLERELDSLYEQYQERREDRDSKVRAKKARKDYEAEEWDGFSDSDKEDDEESEEDGASQAVVKPAPPNSGTLSSKAAMFFDQDIFQGLGDVDDVEDEDSAIEMQEDDKSAKKGSALEKKAPKEAKKKAQAPEDFSDSDPEEPDDPRKKNGQLDIDIITAEAMALAQQMATGEKKSQDIIDDGFNRYTFRDVDGLPEWFLDDENKHSKPQRPITKAAAAAIKEKLRAINARPIKKVMEAKGRKKMKAAQRLEKLRKKSALLADDEALSERDKSQAIAKLMSKAVKKKPKQQVKLVVARGANRGISGRPRGVKGKYKIVDSRMKKDIRAQKRLAKKKK</sequence>
<dbReference type="EC" id="2.1.1.-" evidence="1"/>
<dbReference type="EMBL" id="AAHF01000003">
    <property type="protein sequence ID" value="EAL91403.1"/>
    <property type="molecule type" value="Genomic_DNA"/>
</dbReference>
<dbReference type="RefSeq" id="XP_753441.1">
    <property type="nucleotide sequence ID" value="XM_748348.1"/>
</dbReference>
<dbReference type="SMR" id="Q4WVH3"/>
<dbReference type="FunCoup" id="Q4WVH3">
    <property type="interactions" value="1101"/>
</dbReference>
<dbReference type="STRING" id="330879.Q4WVH3"/>
<dbReference type="EnsemblFungi" id="EAL91403">
    <property type="protein sequence ID" value="EAL91403"/>
    <property type="gene ID" value="AFUA_5G12100"/>
</dbReference>
<dbReference type="GeneID" id="3511612"/>
<dbReference type="KEGG" id="afm:AFUA_5G12100"/>
<dbReference type="VEuPathDB" id="FungiDB:Afu5g12100"/>
<dbReference type="eggNOG" id="KOG1098">
    <property type="taxonomic scope" value="Eukaryota"/>
</dbReference>
<dbReference type="HOGENOM" id="CLU_009422_8_1_1"/>
<dbReference type="InParanoid" id="Q4WVH3"/>
<dbReference type="OMA" id="QRKDKYY"/>
<dbReference type="OrthoDB" id="1287559at2759"/>
<dbReference type="Proteomes" id="UP000002530">
    <property type="component" value="Chromosome 5"/>
</dbReference>
<dbReference type="GO" id="GO:0005730">
    <property type="term" value="C:nucleolus"/>
    <property type="evidence" value="ECO:0000318"/>
    <property type="project" value="GO_Central"/>
</dbReference>
<dbReference type="GO" id="GO:0030687">
    <property type="term" value="C:preribosome, large subunit precursor"/>
    <property type="evidence" value="ECO:0000318"/>
    <property type="project" value="GO_Central"/>
</dbReference>
<dbReference type="GO" id="GO:0016435">
    <property type="term" value="F:rRNA (guanine) methyltransferase activity"/>
    <property type="evidence" value="ECO:0000318"/>
    <property type="project" value="GO_Central"/>
</dbReference>
<dbReference type="GO" id="GO:0070039">
    <property type="term" value="F:rRNA (guanosine-2'-O-)-methyltransferase activity"/>
    <property type="evidence" value="ECO:0007669"/>
    <property type="project" value="UniProtKB-UniRule"/>
</dbReference>
<dbReference type="GO" id="GO:0008650">
    <property type="term" value="F:rRNA (uridine-2'-O-)-methyltransferase activity"/>
    <property type="evidence" value="ECO:0000318"/>
    <property type="project" value="GO_Central"/>
</dbReference>
<dbReference type="GO" id="GO:0000466">
    <property type="term" value="P:maturation of 5.8S rRNA from tricistronic rRNA transcript (SSU-rRNA, 5.8S rRNA, LSU-rRNA)"/>
    <property type="evidence" value="ECO:0000318"/>
    <property type="project" value="GO_Central"/>
</dbReference>
<dbReference type="GO" id="GO:0000463">
    <property type="term" value="P:maturation of LSU-rRNA from tricistronic rRNA transcript (SSU-rRNA, 5.8S rRNA, LSU-rRNA)"/>
    <property type="evidence" value="ECO:0000318"/>
    <property type="project" value="GO_Central"/>
</dbReference>
<dbReference type="GO" id="GO:0031167">
    <property type="term" value="P:rRNA methylation"/>
    <property type="evidence" value="ECO:0000318"/>
    <property type="project" value="GO_Central"/>
</dbReference>
<dbReference type="FunFam" id="3.40.50.150:FF:000004">
    <property type="entry name" value="AdoMet-dependent rRNA methyltransferase SPB1"/>
    <property type="match status" value="1"/>
</dbReference>
<dbReference type="Gene3D" id="3.40.50.150">
    <property type="entry name" value="Vaccinia Virus protein VP39"/>
    <property type="match status" value="1"/>
</dbReference>
<dbReference type="HAMAP" id="MF_01547">
    <property type="entry name" value="RNA_methyltr_E"/>
    <property type="match status" value="1"/>
</dbReference>
<dbReference type="HAMAP" id="MF_03163">
    <property type="entry name" value="RNA_methyltr_E_SPB1"/>
    <property type="match status" value="1"/>
</dbReference>
<dbReference type="InterPro" id="IPR050082">
    <property type="entry name" value="RNA_methyltr_RlmE"/>
</dbReference>
<dbReference type="InterPro" id="IPR002877">
    <property type="entry name" value="RNA_MeTrfase_FtsJ_dom"/>
</dbReference>
<dbReference type="InterPro" id="IPR015507">
    <property type="entry name" value="rRNA-MeTfrase_E"/>
</dbReference>
<dbReference type="InterPro" id="IPR012920">
    <property type="entry name" value="rRNA_MeTfrase_SPB1-like_C"/>
</dbReference>
<dbReference type="InterPro" id="IPR024576">
    <property type="entry name" value="rRNA_MeTfrase_Spb1_DUF3381"/>
</dbReference>
<dbReference type="InterPro" id="IPR029063">
    <property type="entry name" value="SAM-dependent_MTases_sf"/>
</dbReference>
<dbReference type="InterPro" id="IPR028589">
    <property type="entry name" value="SPB1-like"/>
</dbReference>
<dbReference type="PANTHER" id="PTHR10920:SF13">
    <property type="entry name" value="PRE-RRNA 2'-O-RIBOSE RNA METHYLTRANSFERASE FTSJ3"/>
    <property type="match status" value="1"/>
</dbReference>
<dbReference type="PANTHER" id="PTHR10920">
    <property type="entry name" value="RIBOSOMAL RNA METHYLTRANSFERASE"/>
    <property type="match status" value="1"/>
</dbReference>
<dbReference type="Pfam" id="PF11861">
    <property type="entry name" value="DUF3381"/>
    <property type="match status" value="1"/>
</dbReference>
<dbReference type="Pfam" id="PF01728">
    <property type="entry name" value="FtsJ"/>
    <property type="match status" value="1"/>
</dbReference>
<dbReference type="Pfam" id="PF07780">
    <property type="entry name" value="Spb1_C"/>
    <property type="match status" value="1"/>
</dbReference>
<dbReference type="SUPFAM" id="SSF53335">
    <property type="entry name" value="S-adenosyl-L-methionine-dependent methyltransferases"/>
    <property type="match status" value="1"/>
</dbReference>
<protein>
    <recommendedName>
        <fullName evidence="1">AdoMet-dependent rRNA methyltransferase spb1</fullName>
        <ecNumber evidence="1">2.1.1.-</ecNumber>
    </recommendedName>
    <alternativeName>
        <fullName evidence="1">2'-O-ribose RNA methyltransferase</fullName>
    </alternativeName>
    <alternativeName>
        <fullName evidence="1">S-adenosyl-L-methionine-dependent methyltransferase</fullName>
    </alternativeName>
</protein>
<feature type="chain" id="PRO_0000155592" description="AdoMet-dependent rRNA methyltransferase spb1">
    <location>
        <begin position="1"/>
        <end position="795"/>
    </location>
</feature>
<feature type="region of interest" description="Disordered" evidence="2">
    <location>
        <begin position="367"/>
        <end position="416"/>
    </location>
</feature>
<feature type="region of interest" description="Disordered" evidence="2">
    <location>
        <begin position="430"/>
        <end position="534"/>
    </location>
</feature>
<feature type="region of interest" description="Disordered" evidence="2">
    <location>
        <begin position="549"/>
        <end position="613"/>
    </location>
</feature>
<feature type="coiled-coil region" evidence="1">
    <location>
        <begin position="354"/>
        <end position="395"/>
    </location>
</feature>
<feature type="coiled-coil region" evidence="1">
    <location>
        <begin position="445"/>
        <end position="482"/>
    </location>
</feature>
<feature type="compositionally biased region" description="Basic and acidic residues" evidence="2">
    <location>
        <begin position="379"/>
        <end position="390"/>
    </location>
</feature>
<feature type="compositionally biased region" description="Acidic residues" evidence="2">
    <location>
        <begin position="438"/>
        <end position="459"/>
    </location>
</feature>
<feature type="compositionally biased region" description="Basic and acidic residues" evidence="2">
    <location>
        <begin position="460"/>
        <end position="483"/>
    </location>
</feature>
<feature type="compositionally biased region" description="Acidic residues" evidence="2">
    <location>
        <begin position="493"/>
        <end position="515"/>
    </location>
</feature>
<feature type="compositionally biased region" description="Acidic residues" evidence="2">
    <location>
        <begin position="549"/>
        <end position="564"/>
    </location>
</feature>
<feature type="compositionally biased region" description="Basic and acidic residues" evidence="2">
    <location>
        <begin position="565"/>
        <end position="582"/>
    </location>
</feature>
<feature type="compositionally biased region" description="Acidic residues" evidence="2">
    <location>
        <begin position="592"/>
        <end position="602"/>
    </location>
</feature>
<feature type="active site" description="Proton acceptor" evidence="1">
    <location>
        <position position="157"/>
    </location>
</feature>
<feature type="binding site" evidence="1">
    <location>
        <position position="56"/>
    </location>
    <ligand>
        <name>S-adenosyl-L-methionine</name>
        <dbReference type="ChEBI" id="CHEBI:59789"/>
    </ligand>
</feature>
<feature type="binding site" evidence="1">
    <location>
        <position position="58"/>
    </location>
    <ligand>
        <name>S-adenosyl-L-methionine</name>
        <dbReference type="ChEBI" id="CHEBI:59789"/>
    </ligand>
</feature>
<feature type="binding site" evidence="1">
    <location>
        <position position="76"/>
    </location>
    <ligand>
        <name>S-adenosyl-L-methionine</name>
        <dbReference type="ChEBI" id="CHEBI:59789"/>
    </ligand>
</feature>
<feature type="binding site" evidence="1">
    <location>
        <position position="92"/>
    </location>
    <ligand>
        <name>S-adenosyl-L-methionine</name>
        <dbReference type="ChEBI" id="CHEBI:59789"/>
    </ligand>
</feature>
<feature type="binding site" evidence="1">
    <location>
        <position position="117"/>
    </location>
    <ligand>
        <name>S-adenosyl-L-methionine</name>
        <dbReference type="ChEBI" id="CHEBI:59789"/>
    </ligand>
</feature>
<organism>
    <name type="scientific">Aspergillus fumigatus (strain ATCC MYA-4609 / CBS 101355 / FGSC A1100 / Af293)</name>
    <name type="common">Neosartorya fumigata</name>
    <dbReference type="NCBI Taxonomy" id="330879"/>
    <lineage>
        <taxon>Eukaryota</taxon>
        <taxon>Fungi</taxon>
        <taxon>Dikarya</taxon>
        <taxon>Ascomycota</taxon>
        <taxon>Pezizomycotina</taxon>
        <taxon>Eurotiomycetes</taxon>
        <taxon>Eurotiomycetidae</taxon>
        <taxon>Eurotiales</taxon>
        <taxon>Aspergillaceae</taxon>
        <taxon>Aspergillus</taxon>
        <taxon>Aspergillus subgen. Fumigati</taxon>
    </lineage>
</organism>
<name>SPB1_ASPFU</name>
<proteinExistence type="inferred from homology"/>
<comment type="function">
    <text evidence="1">Required for proper assembly of pre-ribosomal particles during the biogenesis of the 60S ribosomal subunit.</text>
</comment>
<comment type="catalytic activity">
    <reaction evidence="1">
        <text>a ribonucleotide in rRNA + S-adenosyl-L-methionine = a 2'-O-methylribonucleotide in rRNA + S-adenosyl-L-homocysteine + H(+)</text>
        <dbReference type="Rhea" id="RHEA:48628"/>
        <dbReference type="Rhea" id="RHEA-COMP:12164"/>
        <dbReference type="Rhea" id="RHEA-COMP:12165"/>
        <dbReference type="ChEBI" id="CHEBI:15378"/>
        <dbReference type="ChEBI" id="CHEBI:57856"/>
        <dbReference type="ChEBI" id="CHEBI:59789"/>
        <dbReference type="ChEBI" id="CHEBI:90675"/>
        <dbReference type="ChEBI" id="CHEBI:90676"/>
    </reaction>
</comment>
<comment type="subunit">
    <text evidence="1">Component of the nucleolar and nucleoplasmic pre-60S ribosomal particle.</text>
</comment>
<comment type="subcellular location">
    <subcellularLocation>
        <location evidence="1">Nucleus</location>
        <location evidence="1">Nucleolus</location>
    </subcellularLocation>
</comment>
<comment type="similarity">
    <text evidence="1">Belongs to the class I-like SAM-binding methyltransferase superfamily. RNA methyltransferase RlmE family. SPB1 subfamily.</text>
</comment>
<gene>
    <name type="primary">spb1</name>
    <name type="ORF">AFUA_5G12100</name>
</gene>
<reference key="1">
    <citation type="journal article" date="2005" name="Nature">
        <title>Genomic sequence of the pathogenic and allergenic filamentous fungus Aspergillus fumigatus.</title>
        <authorList>
            <person name="Nierman W.C."/>
            <person name="Pain A."/>
            <person name="Anderson M.J."/>
            <person name="Wortman J.R."/>
            <person name="Kim H.S."/>
            <person name="Arroyo J."/>
            <person name="Berriman M."/>
            <person name="Abe K."/>
            <person name="Archer D.B."/>
            <person name="Bermejo C."/>
            <person name="Bennett J.W."/>
            <person name="Bowyer P."/>
            <person name="Chen D."/>
            <person name="Collins M."/>
            <person name="Coulsen R."/>
            <person name="Davies R."/>
            <person name="Dyer P.S."/>
            <person name="Farman M.L."/>
            <person name="Fedorova N."/>
            <person name="Fedorova N.D."/>
            <person name="Feldblyum T.V."/>
            <person name="Fischer R."/>
            <person name="Fosker N."/>
            <person name="Fraser A."/>
            <person name="Garcia J.L."/>
            <person name="Garcia M.J."/>
            <person name="Goble A."/>
            <person name="Goldman G.H."/>
            <person name="Gomi K."/>
            <person name="Griffith-Jones S."/>
            <person name="Gwilliam R."/>
            <person name="Haas B.J."/>
            <person name="Haas H."/>
            <person name="Harris D.E."/>
            <person name="Horiuchi H."/>
            <person name="Huang J."/>
            <person name="Humphray S."/>
            <person name="Jimenez J."/>
            <person name="Keller N."/>
            <person name="Khouri H."/>
            <person name="Kitamoto K."/>
            <person name="Kobayashi T."/>
            <person name="Konzack S."/>
            <person name="Kulkarni R."/>
            <person name="Kumagai T."/>
            <person name="Lafton A."/>
            <person name="Latge J.-P."/>
            <person name="Li W."/>
            <person name="Lord A."/>
            <person name="Lu C."/>
            <person name="Majoros W.H."/>
            <person name="May G.S."/>
            <person name="Miller B.L."/>
            <person name="Mohamoud Y."/>
            <person name="Molina M."/>
            <person name="Monod M."/>
            <person name="Mouyna I."/>
            <person name="Mulligan S."/>
            <person name="Murphy L.D."/>
            <person name="O'Neil S."/>
            <person name="Paulsen I."/>
            <person name="Penalva M.A."/>
            <person name="Pertea M."/>
            <person name="Price C."/>
            <person name="Pritchard B.L."/>
            <person name="Quail M.A."/>
            <person name="Rabbinowitsch E."/>
            <person name="Rawlins N."/>
            <person name="Rajandream M.A."/>
            <person name="Reichard U."/>
            <person name="Renauld H."/>
            <person name="Robson G.D."/>
            <person name="Rodriguez de Cordoba S."/>
            <person name="Rodriguez-Pena J.M."/>
            <person name="Ronning C.M."/>
            <person name="Rutter S."/>
            <person name="Salzberg S.L."/>
            <person name="Sanchez M."/>
            <person name="Sanchez-Ferrero J.C."/>
            <person name="Saunders D."/>
            <person name="Seeger K."/>
            <person name="Squares R."/>
            <person name="Squares S."/>
            <person name="Takeuchi M."/>
            <person name="Tekaia F."/>
            <person name="Turner G."/>
            <person name="Vazquez de Aldana C.R."/>
            <person name="Weidman J."/>
            <person name="White O."/>
            <person name="Woodward J.R."/>
            <person name="Yu J.-H."/>
            <person name="Fraser C.M."/>
            <person name="Galagan J.E."/>
            <person name="Asai K."/>
            <person name="Machida M."/>
            <person name="Hall N."/>
            <person name="Barrell B.G."/>
            <person name="Denning D.W."/>
        </authorList>
    </citation>
    <scope>NUCLEOTIDE SEQUENCE [LARGE SCALE GENOMIC DNA]</scope>
    <source>
        <strain>ATCC MYA-4609 / CBS 101355 / FGSC A1100 / Af293</strain>
    </source>
</reference>
<accession>Q4WVH3</accession>